<organism>
    <name type="scientific">Thauera aromatica</name>
    <dbReference type="NCBI Taxonomy" id="59405"/>
    <lineage>
        <taxon>Bacteria</taxon>
        <taxon>Pseudomonadati</taxon>
        <taxon>Pseudomonadota</taxon>
        <taxon>Betaproteobacteria</taxon>
        <taxon>Rhodocyclales</taxon>
        <taxon>Zoogloeaceae</taxon>
        <taxon>Thauera</taxon>
    </lineage>
</organism>
<evidence type="ECO:0000250" key="1"/>
<evidence type="ECO:0000255" key="2">
    <source>
        <dbReference type="PROSITE-ProRule" id="PRU00169"/>
    </source>
</evidence>
<evidence type="ECO:0000255" key="3">
    <source>
        <dbReference type="PROSITE-ProRule" id="PRU00411"/>
    </source>
</evidence>
<evidence type="ECO:0000269" key="4">
    <source>
    </source>
</evidence>
<accession>O87940</accession>
<gene>
    <name type="primary">tdiR</name>
</gene>
<dbReference type="EMBL" id="AJ001848">
    <property type="protein sequence ID" value="CAA05049.1"/>
    <property type="molecule type" value="Genomic_DNA"/>
</dbReference>
<dbReference type="SMR" id="O87940"/>
<dbReference type="GO" id="GO:0003677">
    <property type="term" value="F:DNA binding"/>
    <property type="evidence" value="ECO:0007669"/>
    <property type="project" value="UniProtKB-KW"/>
</dbReference>
<dbReference type="GO" id="GO:0000160">
    <property type="term" value="P:phosphorelay signal transduction system"/>
    <property type="evidence" value="ECO:0007669"/>
    <property type="project" value="UniProtKB-KW"/>
</dbReference>
<dbReference type="GO" id="GO:0006355">
    <property type="term" value="P:regulation of DNA-templated transcription"/>
    <property type="evidence" value="ECO:0007669"/>
    <property type="project" value="InterPro"/>
</dbReference>
<dbReference type="CDD" id="cd06170">
    <property type="entry name" value="LuxR_C_like"/>
    <property type="match status" value="1"/>
</dbReference>
<dbReference type="CDD" id="cd17537">
    <property type="entry name" value="REC_FixJ"/>
    <property type="match status" value="1"/>
</dbReference>
<dbReference type="Gene3D" id="3.40.50.2300">
    <property type="match status" value="1"/>
</dbReference>
<dbReference type="Gene3D" id="1.10.10.10">
    <property type="entry name" value="Winged helix-like DNA-binding domain superfamily/Winged helix DNA-binding domain"/>
    <property type="match status" value="1"/>
</dbReference>
<dbReference type="InterPro" id="IPR011006">
    <property type="entry name" value="CheY-like_superfamily"/>
</dbReference>
<dbReference type="InterPro" id="IPR016032">
    <property type="entry name" value="Sig_transdc_resp-reg_C-effctor"/>
</dbReference>
<dbReference type="InterPro" id="IPR001789">
    <property type="entry name" value="Sig_transdc_resp-reg_receiver"/>
</dbReference>
<dbReference type="InterPro" id="IPR000792">
    <property type="entry name" value="Tscrpt_reg_LuxR_C"/>
</dbReference>
<dbReference type="InterPro" id="IPR036388">
    <property type="entry name" value="WH-like_DNA-bd_sf"/>
</dbReference>
<dbReference type="PANTHER" id="PTHR44688">
    <property type="entry name" value="DNA-BINDING TRANSCRIPTIONAL ACTIVATOR DEVR_DOSR"/>
    <property type="match status" value="1"/>
</dbReference>
<dbReference type="PANTHER" id="PTHR44688:SF16">
    <property type="entry name" value="DNA-BINDING TRANSCRIPTIONAL ACTIVATOR DEVR_DOSR"/>
    <property type="match status" value="1"/>
</dbReference>
<dbReference type="Pfam" id="PF00196">
    <property type="entry name" value="GerE"/>
    <property type="match status" value="1"/>
</dbReference>
<dbReference type="Pfam" id="PF00072">
    <property type="entry name" value="Response_reg"/>
    <property type="match status" value="1"/>
</dbReference>
<dbReference type="PRINTS" id="PR00038">
    <property type="entry name" value="HTHLUXR"/>
</dbReference>
<dbReference type="SMART" id="SM00421">
    <property type="entry name" value="HTH_LUXR"/>
    <property type="match status" value="1"/>
</dbReference>
<dbReference type="SMART" id="SM00448">
    <property type="entry name" value="REC"/>
    <property type="match status" value="1"/>
</dbReference>
<dbReference type="SUPFAM" id="SSF46894">
    <property type="entry name" value="C-terminal effector domain of the bipartite response regulators"/>
    <property type="match status" value="1"/>
</dbReference>
<dbReference type="SUPFAM" id="SSF52172">
    <property type="entry name" value="CheY-like"/>
    <property type="match status" value="1"/>
</dbReference>
<dbReference type="PROSITE" id="PS00622">
    <property type="entry name" value="HTH_LUXR_1"/>
    <property type="match status" value="1"/>
</dbReference>
<dbReference type="PROSITE" id="PS50043">
    <property type="entry name" value="HTH_LUXR_2"/>
    <property type="match status" value="1"/>
</dbReference>
<dbReference type="PROSITE" id="PS50110">
    <property type="entry name" value="RESPONSE_REGULATORY"/>
    <property type="match status" value="1"/>
</dbReference>
<feature type="chain" id="PRO_0000418871" description="Transcriptional regulatory protein TdiR">
    <location>
        <begin position="1"/>
        <end position="227"/>
    </location>
</feature>
<feature type="domain" description="Response regulatory" evidence="2">
    <location>
        <begin position="11"/>
        <end position="125"/>
    </location>
</feature>
<feature type="domain" description="HTH luxR-type" evidence="3">
    <location>
        <begin position="141"/>
        <end position="206"/>
    </location>
</feature>
<feature type="DNA-binding region" description="H-T-H motif" evidence="3">
    <location>
        <begin position="165"/>
        <end position="184"/>
    </location>
</feature>
<feature type="modified residue" description="4-aspartylphosphate" evidence="2">
    <location>
        <position position="60"/>
    </location>
</feature>
<protein>
    <recommendedName>
        <fullName>Transcriptional regulatory protein TdiR</fullName>
    </recommendedName>
</protein>
<name>TDIR_THAAR</name>
<sequence length="227" mass="24759">MQATKTGNASTVFVVDDEASVRDSLTWLLNSISLDVRTFESAKDFLDADISCTHGCVVLDVRMQNVSGLQLQQALSERGFKLPIIFLSAYGDAQMGAQAVKKGAFDFLQKPYRNQDLLDAVNAALALNREMADKQNEKQKHLDLLATLSQREMEILDKVVAGSSSKEIAKLLGISYKTVEAHRGRIISKLGLKSTGDLMHFVMRGSSHCSDCGRQPLPGSSPCRPAA</sequence>
<keyword id="KW-0238">DNA-binding</keyword>
<keyword id="KW-0597">Phosphoprotein</keyword>
<keyword id="KW-0804">Transcription</keyword>
<keyword id="KW-0805">Transcription regulation</keyword>
<keyword id="KW-0902">Two-component regulatory system</keyword>
<proteinExistence type="evidence at protein level"/>
<comment type="function">
    <text evidence="4">Member of the two-component regulatory system TdiR/TdiS, which probably regulates transcription of toluene catabolic genes (bss operon). Binds to DNA.</text>
</comment>
<comment type="PTM">
    <text evidence="1">Phosphorylated by TdiS.</text>
</comment>
<reference key="1">
    <citation type="journal article" date="1998" name="Mol. Microbiol.">
        <title>Biochemical and genetic characterization of benzylsuccinate synthase from Thauera aromatica: a new glycyl radical enzyme catalysing the first step in anaerobic toluene metabolism.</title>
        <authorList>
            <person name="Leuthner B."/>
            <person name="Leutwein C."/>
            <person name="Schulz H."/>
            <person name="Horth P."/>
            <person name="Haehnel W."/>
            <person name="Schiltz E."/>
            <person name="Schagger H."/>
            <person name="Heider J."/>
        </authorList>
    </citation>
    <scope>NUCLEOTIDE SEQUENCE [GENOMIC DNA]</scope>
    <source>
        <strain>DSM 6984 / CIP 107765 / K172</strain>
    </source>
</reference>
<reference key="2">
    <citation type="journal article" date="1998" name="FEMS Microbiol. Lett.">
        <title>A two-component system involved in regulation of anaerobic toluene metabolism in Thauera aromatica.</title>
        <authorList>
            <person name="Leuthner B."/>
            <person name="Heider J."/>
        </authorList>
    </citation>
    <scope>FUNCTION</scope>
    <scope>DNA-BINDING</scope>
    <source>
        <strain>DSM 6984 / CIP 107765 / K172</strain>
    </source>
</reference>